<organism>
    <name type="scientific">Lacticaseibacillus paracasei (strain ATCC 334 / BCRC 17002 / CCUG 31169 / CIP 107868 / KCTC 3260 / NRRL B-441)</name>
    <name type="common">Lactobacillus paracasei</name>
    <dbReference type="NCBI Taxonomy" id="321967"/>
    <lineage>
        <taxon>Bacteria</taxon>
        <taxon>Bacillati</taxon>
        <taxon>Bacillota</taxon>
        <taxon>Bacilli</taxon>
        <taxon>Lactobacillales</taxon>
        <taxon>Lactobacillaceae</taxon>
        <taxon>Lacticaseibacillus</taxon>
    </lineage>
</organism>
<protein>
    <recommendedName>
        <fullName evidence="1">UPF0210 protein LSEI_0897</fullName>
    </recommendedName>
</protein>
<feature type="chain" id="PRO_1000066752" description="UPF0210 protein LSEI_0897">
    <location>
        <begin position="1"/>
        <end position="447"/>
    </location>
</feature>
<sequence>METQQIKETIEMISEENLDIRTITMGISLLDCVTGDLQTTADKVYAKIMAKAANLVPVADAISDEYGIPIVNKRISVTPVSLLAGADQNLDFRPIAQAMDRAAKDLGVDLIGGYTALVQNGSTPAETALMKSLPEVLDTTERVCASVNIGSTRSGLNMDAVKLMGTVVKEVAMRKPQNAMKLVVFCNAVEDNPFMAGAFWGISEGDVAINTGVSGPGVVERAIAAKPAASFEEICETIKQTAFKVSRMGQFVGKVAADRLDVPFNIVDLSLAPTPAKGDSVAQILETMGLSHVGTPGTTAALALLNDAVKKGGIMAAERVGGLSGAFIPVSEDANMITAAAKGQISLEKLEAMTAVCSVGLDMVAVPGDTPDATISGMIADEAAIGMINNKTTAVRVIPVPGKQVGDIVEFGGIFGTAPIMAINDGDAQQFINRGGRIPAPIHSFKN</sequence>
<keyword id="KW-1185">Reference proteome</keyword>
<evidence type="ECO:0000255" key="1">
    <source>
        <dbReference type="HAMAP-Rule" id="MF_01221"/>
    </source>
</evidence>
<accession>Q03AS5</accession>
<proteinExistence type="inferred from homology"/>
<comment type="subunit">
    <text evidence="1">Homodimer.</text>
</comment>
<comment type="similarity">
    <text evidence="1">Belongs to the UPF0210 family.</text>
</comment>
<gene>
    <name type="ordered locus">LSEI_0897</name>
</gene>
<name>Y897_LACP3</name>
<dbReference type="EMBL" id="CP000423">
    <property type="protein sequence ID" value="ABJ69697.1"/>
    <property type="molecule type" value="Genomic_DNA"/>
</dbReference>
<dbReference type="RefSeq" id="WP_011674310.1">
    <property type="nucleotide sequence ID" value="NC_008526.1"/>
</dbReference>
<dbReference type="RefSeq" id="YP_806139.1">
    <property type="nucleotide sequence ID" value="NC_008526.1"/>
</dbReference>
<dbReference type="SMR" id="Q03AS5"/>
<dbReference type="STRING" id="321967.LSEI_0897"/>
<dbReference type="PaxDb" id="321967-LSEI_0897"/>
<dbReference type="KEGG" id="lca:LSEI_0897"/>
<dbReference type="PATRIC" id="fig|321967.11.peg.866"/>
<dbReference type="HOGENOM" id="CLU_048704_0_0_9"/>
<dbReference type="Proteomes" id="UP000001651">
    <property type="component" value="Chromosome"/>
</dbReference>
<dbReference type="CDD" id="cd08025">
    <property type="entry name" value="RNR_PFL_like_DUF711"/>
    <property type="match status" value="1"/>
</dbReference>
<dbReference type="Gene3D" id="3.20.70.20">
    <property type="match status" value="1"/>
</dbReference>
<dbReference type="HAMAP" id="MF_01221">
    <property type="entry name" value="UPF0210"/>
    <property type="match status" value="1"/>
</dbReference>
<dbReference type="InterPro" id="IPR007841">
    <property type="entry name" value="UPF0210"/>
</dbReference>
<dbReference type="NCBIfam" id="NF003700">
    <property type="entry name" value="PRK05313.1"/>
    <property type="match status" value="1"/>
</dbReference>
<dbReference type="PANTHER" id="PTHR37560:SF1">
    <property type="entry name" value="UPF0210 PROTEIN MJ1665"/>
    <property type="match status" value="1"/>
</dbReference>
<dbReference type="PANTHER" id="PTHR37560">
    <property type="entry name" value="UPF0210 PROTEIN SPR0218"/>
    <property type="match status" value="1"/>
</dbReference>
<dbReference type="Pfam" id="PF05167">
    <property type="entry name" value="DUF711"/>
    <property type="match status" value="1"/>
</dbReference>
<dbReference type="SUPFAM" id="SSF51998">
    <property type="entry name" value="PFL-like glycyl radical enzymes"/>
    <property type="match status" value="1"/>
</dbReference>
<reference key="1">
    <citation type="journal article" date="2006" name="Proc. Natl. Acad. Sci. U.S.A.">
        <title>Comparative genomics of the lactic acid bacteria.</title>
        <authorList>
            <person name="Makarova K.S."/>
            <person name="Slesarev A."/>
            <person name="Wolf Y.I."/>
            <person name="Sorokin A."/>
            <person name="Mirkin B."/>
            <person name="Koonin E.V."/>
            <person name="Pavlov A."/>
            <person name="Pavlova N."/>
            <person name="Karamychev V."/>
            <person name="Polouchine N."/>
            <person name="Shakhova V."/>
            <person name="Grigoriev I."/>
            <person name="Lou Y."/>
            <person name="Rohksar D."/>
            <person name="Lucas S."/>
            <person name="Huang K."/>
            <person name="Goodstein D.M."/>
            <person name="Hawkins T."/>
            <person name="Plengvidhya V."/>
            <person name="Welker D."/>
            <person name="Hughes J."/>
            <person name="Goh Y."/>
            <person name="Benson A."/>
            <person name="Baldwin K."/>
            <person name="Lee J.-H."/>
            <person name="Diaz-Muniz I."/>
            <person name="Dosti B."/>
            <person name="Smeianov V."/>
            <person name="Wechter W."/>
            <person name="Barabote R."/>
            <person name="Lorca G."/>
            <person name="Altermann E."/>
            <person name="Barrangou R."/>
            <person name="Ganesan B."/>
            <person name="Xie Y."/>
            <person name="Rawsthorne H."/>
            <person name="Tamir D."/>
            <person name="Parker C."/>
            <person name="Breidt F."/>
            <person name="Broadbent J.R."/>
            <person name="Hutkins R."/>
            <person name="O'Sullivan D."/>
            <person name="Steele J."/>
            <person name="Unlu G."/>
            <person name="Saier M.H. Jr."/>
            <person name="Klaenhammer T."/>
            <person name="Richardson P."/>
            <person name="Kozyavkin S."/>
            <person name="Weimer B.C."/>
            <person name="Mills D.A."/>
        </authorList>
    </citation>
    <scope>NUCLEOTIDE SEQUENCE [LARGE SCALE GENOMIC DNA]</scope>
    <source>
        <strain>ATCC 334 / BCRC 17002 / CCUG 31169 / CIP 107868 / KCTC 3260 / NRRL B-441</strain>
    </source>
</reference>